<comment type="function">
    <text evidence="1">Specifically methylates the N4 position of cytidine in position 1402 (C1402) of 16S rRNA.</text>
</comment>
<comment type="catalytic activity">
    <reaction evidence="1">
        <text>cytidine(1402) in 16S rRNA + S-adenosyl-L-methionine = N(4)-methylcytidine(1402) in 16S rRNA + S-adenosyl-L-homocysteine + H(+)</text>
        <dbReference type="Rhea" id="RHEA:42928"/>
        <dbReference type="Rhea" id="RHEA-COMP:10286"/>
        <dbReference type="Rhea" id="RHEA-COMP:10287"/>
        <dbReference type="ChEBI" id="CHEBI:15378"/>
        <dbReference type="ChEBI" id="CHEBI:57856"/>
        <dbReference type="ChEBI" id="CHEBI:59789"/>
        <dbReference type="ChEBI" id="CHEBI:74506"/>
        <dbReference type="ChEBI" id="CHEBI:82748"/>
        <dbReference type="EC" id="2.1.1.199"/>
    </reaction>
</comment>
<comment type="subcellular location">
    <subcellularLocation>
        <location evidence="1">Cytoplasm</location>
    </subcellularLocation>
</comment>
<comment type="similarity">
    <text evidence="1">Belongs to the methyltransferase superfamily. RsmH family.</text>
</comment>
<organism>
    <name type="scientific">Francisella tularensis subsp. tularensis (strain FSC 198)</name>
    <dbReference type="NCBI Taxonomy" id="393115"/>
    <lineage>
        <taxon>Bacteria</taxon>
        <taxon>Pseudomonadati</taxon>
        <taxon>Pseudomonadota</taxon>
        <taxon>Gammaproteobacteria</taxon>
        <taxon>Thiotrichales</taxon>
        <taxon>Francisellaceae</taxon>
        <taxon>Francisella</taxon>
    </lineage>
</organism>
<name>RSMH_FRAT1</name>
<evidence type="ECO:0000255" key="1">
    <source>
        <dbReference type="HAMAP-Rule" id="MF_01007"/>
    </source>
</evidence>
<sequence>MHYSVLLQESINDLNINPQGIYIDATFGRGGHSKAILNRLTTGRLIAFDKDLDAISYARENFQFSNFEIVHASFASIYDYCLQHSLLGKIDGIIMDLGVSSPQLDNAARGFSFTHNGPLDMRMDVSKGITASQALEELSVDDLSYIFKVYGEERFAKKIALRIKDYIQQNGSIRKTLELAELILATIGKKEKKNPATRCFQALRIYVNNELKDLEALLENILAVIKSGGRIAAISFHSLEDRIVKQKFSALINPKQELNRITKMLPQDSSQIKLKWITKKSKANEDELNQNVRSRSAILRVVEKL</sequence>
<proteinExistence type="inferred from homology"/>
<accession>Q14ID3</accession>
<keyword id="KW-0963">Cytoplasm</keyword>
<keyword id="KW-0489">Methyltransferase</keyword>
<keyword id="KW-0698">rRNA processing</keyword>
<keyword id="KW-0949">S-adenosyl-L-methionine</keyword>
<keyword id="KW-0808">Transferase</keyword>
<feature type="chain" id="PRO_0000386901" description="Ribosomal RNA small subunit methyltransferase H">
    <location>
        <begin position="1"/>
        <end position="305"/>
    </location>
</feature>
<feature type="binding site" evidence="1">
    <location>
        <begin position="30"/>
        <end position="32"/>
    </location>
    <ligand>
        <name>S-adenosyl-L-methionine</name>
        <dbReference type="ChEBI" id="CHEBI:59789"/>
    </ligand>
</feature>
<feature type="binding site" evidence="1">
    <location>
        <position position="49"/>
    </location>
    <ligand>
        <name>S-adenosyl-L-methionine</name>
        <dbReference type="ChEBI" id="CHEBI:59789"/>
    </ligand>
</feature>
<feature type="binding site" evidence="1">
    <location>
        <position position="74"/>
    </location>
    <ligand>
        <name>S-adenosyl-L-methionine</name>
        <dbReference type="ChEBI" id="CHEBI:59789"/>
    </ligand>
</feature>
<feature type="binding site" evidence="1">
    <location>
        <position position="96"/>
    </location>
    <ligand>
        <name>S-adenosyl-L-methionine</name>
        <dbReference type="ChEBI" id="CHEBI:59789"/>
    </ligand>
</feature>
<feature type="binding site" evidence="1">
    <location>
        <position position="103"/>
    </location>
    <ligand>
        <name>S-adenosyl-L-methionine</name>
        <dbReference type="ChEBI" id="CHEBI:59789"/>
    </ligand>
</feature>
<gene>
    <name evidence="1" type="primary">rsmH</name>
    <name type="synonym">mraW</name>
    <name type="ordered locus">FTF0695</name>
</gene>
<protein>
    <recommendedName>
        <fullName evidence="1">Ribosomal RNA small subunit methyltransferase H</fullName>
        <ecNumber evidence="1">2.1.1.199</ecNumber>
    </recommendedName>
    <alternativeName>
        <fullName evidence="1">16S rRNA m(4)C1402 methyltransferase</fullName>
    </alternativeName>
    <alternativeName>
        <fullName evidence="1">rRNA (cytosine-N(4)-)-methyltransferase RsmH</fullName>
    </alternativeName>
</protein>
<reference key="1">
    <citation type="journal article" date="2007" name="PLoS ONE">
        <title>Genome sequencing shows that European isolates of Francisella tularensis subspecies tularensis are almost identical to US laboratory strain Schu S4.</title>
        <authorList>
            <person name="Chaudhuri R.R."/>
            <person name="Ren C.-P."/>
            <person name="Desmond L."/>
            <person name="Vincent G.A."/>
            <person name="Silman N.J."/>
            <person name="Brehm J.K."/>
            <person name="Elmore M.J."/>
            <person name="Hudson M.J."/>
            <person name="Forsman M."/>
            <person name="Isherwood K.E."/>
            <person name="Gurycova D."/>
            <person name="Minton N.P."/>
            <person name="Titball R.W."/>
            <person name="Pallen M.J."/>
            <person name="Vipond R."/>
        </authorList>
    </citation>
    <scope>NUCLEOTIDE SEQUENCE [LARGE SCALE GENOMIC DNA]</scope>
    <source>
        <strain>FSC 198</strain>
    </source>
</reference>
<dbReference type="EC" id="2.1.1.199" evidence="1"/>
<dbReference type="EMBL" id="AM286280">
    <property type="protein sequence ID" value="CAL08711.1"/>
    <property type="molecule type" value="Genomic_DNA"/>
</dbReference>
<dbReference type="RefSeq" id="WP_003020492.1">
    <property type="nucleotide sequence ID" value="NC_008245.1"/>
</dbReference>
<dbReference type="SMR" id="Q14ID3"/>
<dbReference type="KEGG" id="ftf:FTF0695"/>
<dbReference type="HOGENOM" id="CLU_038422_2_0_6"/>
<dbReference type="GO" id="GO:0005737">
    <property type="term" value="C:cytoplasm"/>
    <property type="evidence" value="ECO:0007669"/>
    <property type="project" value="UniProtKB-SubCell"/>
</dbReference>
<dbReference type="GO" id="GO:0071424">
    <property type="term" value="F:rRNA (cytosine-N4-)-methyltransferase activity"/>
    <property type="evidence" value="ECO:0007669"/>
    <property type="project" value="UniProtKB-UniRule"/>
</dbReference>
<dbReference type="GO" id="GO:0070475">
    <property type="term" value="P:rRNA base methylation"/>
    <property type="evidence" value="ECO:0007669"/>
    <property type="project" value="UniProtKB-UniRule"/>
</dbReference>
<dbReference type="Gene3D" id="1.10.150.170">
    <property type="entry name" value="Putative methyltransferase TM0872, insert domain"/>
    <property type="match status" value="1"/>
</dbReference>
<dbReference type="Gene3D" id="3.40.50.150">
    <property type="entry name" value="Vaccinia Virus protein VP39"/>
    <property type="match status" value="1"/>
</dbReference>
<dbReference type="HAMAP" id="MF_01007">
    <property type="entry name" value="16SrRNA_methyltr_H"/>
    <property type="match status" value="1"/>
</dbReference>
<dbReference type="InterPro" id="IPR002903">
    <property type="entry name" value="RsmH"/>
</dbReference>
<dbReference type="InterPro" id="IPR023397">
    <property type="entry name" value="SAM-dep_MeTrfase_MraW_recog"/>
</dbReference>
<dbReference type="InterPro" id="IPR029063">
    <property type="entry name" value="SAM-dependent_MTases_sf"/>
</dbReference>
<dbReference type="NCBIfam" id="TIGR00006">
    <property type="entry name" value="16S rRNA (cytosine(1402)-N(4))-methyltransferase RsmH"/>
    <property type="match status" value="1"/>
</dbReference>
<dbReference type="PANTHER" id="PTHR11265:SF0">
    <property type="entry name" value="12S RRNA N4-METHYLCYTIDINE METHYLTRANSFERASE"/>
    <property type="match status" value="1"/>
</dbReference>
<dbReference type="PANTHER" id="PTHR11265">
    <property type="entry name" value="S-ADENOSYL-METHYLTRANSFERASE MRAW"/>
    <property type="match status" value="1"/>
</dbReference>
<dbReference type="Pfam" id="PF01795">
    <property type="entry name" value="Methyltransf_5"/>
    <property type="match status" value="1"/>
</dbReference>
<dbReference type="PIRSF" id="PIRSF004486">
    <property type="entry name" value="MraW"/>
    <property type="match status" value="1"/>
</dbReference>
<dbReference type="SUPFAM" id="SSF81799">
    <property type="entry name" value="Putative methyltransferase TM0872, insert domain"/>
    <property type="match status" value="1"/>
</dbReference>
<dbReference type="SUPFAM" id="SSF53335">
    <property type="entry name" value="S-adenosyl-L-methionine-dependent methyltransferases"/>
    <property type="match status" value="1"/>
</dbReference>